<keyword id="KW-0687">Ribonucleoprotein</keyword>
<keyword id="KW-0689">Ribosomal protein</keyword>
<keyword id="KW-0694">RNA-binding</keyword>
<keyword id="KW-0699">rRNA-binding</keyword>
<organism>
    <name type="scientific">Lactobacillus johnsonii (strain CNCM I-12250 / La1 / NCC 533)</name>
    <dbReference type="NCBI Taxonomy" id="257314"/>
    <lineage>
        <taxon>Bacteria</taxon>
        <taxon>Bacillati</taxon>
        <taxon>Bacillota</taxon>
        <taxon>Bacilli</taxon>
        <taxon>Lactobacillales</taxon>
        <taxon>Lactobacillaceae</taxon>
        <taxon>Lactobacillus</taxon>
    </lineage>
</organism>
<protein>
    <recommendedName>
        <fullName evidence="1">Large ribosomal subunit protein uL22</fullName>
    </recommendedName>
    <alternativeName>
        <fullName evidence="2">50S ribosomal protein L22</fullName>
    </alternativeName>
</protein>
<comment type="function">
    <text evidence="1">This protein binds specifically to 23S rRNA; its binding is stimulated by other ribosomal proteins, e.g. L4, L17, and L20. It is important during the early stages of 50S assembly. It makes multiple contacts with different domains of the 23S rRNA in the assembled 50S subunit and ribosome (By similarity).</text>
</comment>
<comment type="function">
    <text evidence="1">The globular domain of the protein is located near the polypeptide exit tunnel on the outside of the subunit, while an extended beta-hairpin is found that lines the wall of the exit tunnel in the center of the 70S ribosome.</text>
</comment>
<comment type="subunit">
    <text evidence="1">Part of the 50S ribosomal subunit.</text>
</comment>
<comment type="similarity">
    <text evidence="1">Belongs to the universal ribosomal protein uL22 family.</text>
</comment>
<sequence length="117" mass="12771">MAEQISSAKAEARTVRIAPRKARLVVDLIRGKSVAEALAILQFTPRAASPIVEKVLKSAIANAEHNYDLESANLYVSEAYVNEGATLKRFRPRAKGMASPINKRTSHVVVVVSEKND</sequence>
<dbReference type="EMBL" id="AE017198">
    <property type="protein sequence ID" value="AAS08330.1"/>
    <property type="molecule type" value="Genomic_DNA"/>
</dbReference>
<dbReference type="RefSeq" id="WP_003649465.1">
    <property type="nucleotide sequence ID" value="NC_005362.1"/>
</dbReference>
<dbReference type="SMR" id="Q74L84"/>
<dbReference type="GeneID" id="83569759"/>
<dbReference type="KEGG" id="ljo:LJ_0344"/>
<dbReference type="eggNOG" id="COG0091">
    <property type="taxonomic scope" value="Bacteria"/>
</dbReference>
<dbReference type="HOGENOM" id="CLU_083987_3_3_9"/>
<dbReference type="Proteomes" id="UP000000581">
    <property type="component" value="Chromosome"/>
</dbReference>
<dbReference type="GO" id="GO:0022625">
    <property type="term" value="C:cytosolic large ribosomal subunit"/>
    <property type="evidence" value="ECO:0007669"/>
    <property type="project" value="TreeGrafter"/>
</dbReference>
<dbReference type="GO" id="GO:0019843">
    <property type="term" value="F:rRNA binding"/>
    <property type="evidence" value="ECO:0007669"/>
    <property type="project" value="UniProtKB-UniRule"/>
</dbReference>
<dbReference type="GO" id="GO:0003735">
    <property type="term" value="F:structural constituent of ribosome"/>
    <property type="evidence" value="ECO:0007669"/>
    <property type="project" value="InterPro"/>
</dbReference>
<dbReference type="GO" id="GO:0006412">
    <property type="term" value="P:translation"/>
    <property type="evidence" value="ECO:0007669"/>
    <property type="project" value="UniProtKB-UniRule"/>
</dbReference>
<dbReference type="CDD" id="cd00336">
    <property type="entry name" value="Ribosomal_L22"/>
    <property type="match status" value="1"/>
</dbReference>
<dbReference type="FunFam" id="3.90.470.10:FF:000001">
    <property type="entry name" value="50S ribosomal protein L22"/>
    <property type="match status" value="1"/>
</dbReference>
<dbReference type="Gene3D" id="3.90.470.10">
    <property type="entry name" value="Ribosomal protein L22/L17"/>
    <property type="match status" value="1"/>
</dbReference>
<dbReference type="HAMAP" id="MF_01331_B">
    <property type="entry name" value="Ribosomal_uL22_B"/>
    <property type="match status" value="1"/>
</dbReference>
<dbReference type="InterPro" id="IPR001063">
    <property type="entry name" value="Ribosomal_uL22"/>
</dbReference>
<dbReference type="InterPro" id="IPR005727">
    <property type="entry name" value="Ribosomal_uL22_bac/chlpt-type"/>
</dbReference>
<dbReference type="InterPro" id="IPR047867">
    <property type="entry name" value="Ribosomal_uL22_bac/org-type"/>
</dbReference>
<dbReference type="InterPro" id="IPR036394">
    <property type="entry name" value="Ribosomal_uL22_sf"/>
</dbReference>
<dbReference type="NCBIfam" id="TIGR01044">
    <property type="entry name" value="rplV_bact"/>
    <property type="match status" value="1"/>
</dbReference>
<dbReference type="PANTHER" id="PTHR13501">
    <property type="entry name" value="CHLOROPLAST 50S RIBOSOMAL PROTEIN L22-RELATED"/>
    <property type="match status" value="1"/>
</dbReference>
<dbReference type="PANTHER" id="PTHR13501:SF8">
    <property type="entry name" value="LARGE RIBOSOMAL SUBUNIT PROTEIN UL22M"/>
    <property type="match status" value="1"/>
</dbReference>
<dbReference type="Pfam" id="PF00237">
    <property type="entry name" value="Ribosomal_L22"/>
    <property type="match status" value="1"/>
</dbReference>
<dbReference type="SUPFAM" id="SSF54843">
    <property type="entry name" value="Ribosomal protein L22"/>
    <property type="match status" value="1"/>
</dbReference>
<name>RL22_LACJO</name>
<reference key="1">
    <citation type="journal article" date="2004" name="Proc. Natl. Acad. Sci. U.S.A.">
        <title>The genome sequence of the probiotic intestinal bacterium Lactobacillus johnsonii NCC 533.</title>
        <authorList>
            <person name="Pridmore R.D."/>
            <person name="Berger B."/>
            <person name="Desiere F."/>
            <person name="Vilanova D."/>
            <person name="Barretto C."/>
            <person name="Pittet A.-C."/>
            <person name="Zwahlen M.-C."/>
            <person name="Rouvet M."/>
            <person name="Altermann E."/>
            <person name="Barrangou R."/>
            <person name="Mollet B."/>
            <person name="Mercenier A."/>
            <person name="Klaenhammer T."/>
            <person name="Arigoni F."/>
            <person name="Schell M.A."/>
        </authorList>
    </citation>
    <scope>NUCLEOTIDE SEQUENCE [LARGE SCALE GENOMIC DNA]</scope>
    <source>
        <strain>CNCM I-1225 / La1 / NCC 533</strain>
    </source>
</reference>
<accession>Q74L84</accession>
<feature type="chain" id="PRO_0000125165" description="Large ribosomal subunit protein uL22">
    <location>
        <begin position="1"/>
        <end position="117"/>
    </location>
</feature>
<gene>
    <name evidence="1" type="primary">rplV</name>
    <name type="ordered locus">LJ_0344</name>
</gene>
<evidence type="ECO:0000255" key="1">
    <source>
        <dbReference type="HAMAP-Rule" id="MF_01331"/>
    </source>
</evidence>
<evidence type="ECO:0000305" key="2"/>
<proteinExistence type="inferred from homology"/>